<accession>A8YVR3</accession>
<keyword id="KW-0030">Aminoacyl-tRNA synthetase</keyword>
<keyword id="KW-0067">ATP-binding</keyword>
<keyword id="KW-0963">Cytoplasm</keyword>
<keyword id="KW-0436">Ligase</keyword>
<keyword id="KW-0547">Nucleotide-binding</keyword>
<keyword id="KW-0648">Protein biosynthesis</keyword>
<reference key="1">
    <citation type="journal article" date="2008" name="J. Bacteriol.">
        <title>Genome sequence of Lactobacillus helveticus: an organism distinguished by selective gene loss and IS element expansion.</title>
        <authorList>
            <person name="Callanan M."/>
            <person name="Kaleta P."/>
            <person name="O'Callaghan J."/>
            <person name="O'Sullivan O."/>
            <person name="Jordan K."/>
            <person name="McAuliffe O."/>
            <person name="Sangrador-Vegas A."/>
            <person name="Slattery L."/>
            <person name="Fitzgerald G.F."/>
            <person name="Beresford T."/>
            <person name="Ross R.P."/>
        </authorList>
    </citation>
    <scope>NUCLEOTIDE SEQUENCE [LARGE SCALE GENOMIC DNA]</scope>
    <source>
        <strain>DPC 4571</strain>
    </source>
</reference>
<comment type="function">
    <text evidence="1">Catalyzes the attachment of proline to tRNA(Pro) in a two-step reaction: proline is first activated by ATP to form Pro-AMP and then transferred to the acceptor end of tRNA(Pro). As ProRS can inadvertently accommodate and process non-cognate amino acids such as alanine and cysteine, to avoid such errors it has two additional distinct editing activities against alanine. One activity is designated as 'pretransfer' editing and involves the tRNA(Pro)-independent hydrolysis of activated Ala-AMP. The other activity is designated 'posttransfer' editing and involves deacylation of mischarged Ala-tRNA(Pro). The misacylated Cys-tRNA(Pro) is not edited by ProRS.</text>
</comment>
<comment type="catalytic activity">
    <reaction evidence="1">
        <text>tRNA(Pro) + L-proline + ATP = L-prolyl-tRNA(Pro) + AMP + diphosphate</text>
        <dbReference type="Rhea" id="RHEA:14305"/>
        <dbReference type="Rhea" id="RHEA-COMP:9700"/>
        <dbReference type="Rhea" id="RHEA-COMP:9702"/>
        <dbReference type="ChEBI" id="CHEBI:30616"/>
        <dbReference type="ChEBI" id="CHEBI:33019"/>
        <dbReference type="ChEBI" id="CHEBI:60039"/>
        <dbReference type="ChEBI" id="CHEBI:78442"/>
        <dbReference type="ChEBI" id="CHEBI:78532"/>
        <dbReference type="ChEBI" id="CHEBI:456215"/>
        <dbReference type="EC" id="6.1.1.15"/>
    </reaction>
</comment>
<comment type="subunit">
    <text evidence="1">Homodimer.</text>
</comment>
<comment type="subcellular location">
    <subcellularLocation>
        <location evidence="1">Cytoplasm</location>
    </subcellularLocation>
</comment>
<comment type="domain">
    <text evidence="1">Consists of three domains: the N-terminal catalytic domain, the editing domain and the C-terminal anticodon-binding domain.</text>
</comment>
<comment type="similarity">
    <text evidence="1">Belongs to the class-II aminoacyl-tRNA synthetase family. ProS type 1 subfamily.</text>
</comment>
<feature type="chain" id="PRO_1000073590" description="Proline--tRNA ligase">
    <location>
        <begin position="1"/>
        <end position="565"/>
    </location>
</feature>
<proteinExistence type="inferred from homology"/>
<organism>
    <name type="scientific">Lactobacillus helveticus (strain DPC 4571)</name>
    <dbReference type="NCBI Taxonomy" id="405566"/>
    <lineage>
        <taxon>Bacteria</taxon>
        <taxon>Bacillati</taxon>
        <taxon>Bacillota</taxon>
        <taxon>Bacilli</taxon>
        <taxon>Lactobacillales</taxon>
        <taxon>Lactobacillaceae</taxon>
        <taxon>Lactobacillus</taxon>
    </lineage>
</organism>
<dbReference type="EC" id="6.1.1.15" evidence="1"/>
<dbReference type="EMBL" id="CP000517">
    <property type="protein sequence ID" value="ABX27350.1"/>
    <property type="molecule type" value="Genomic_DNA"/>
</dbReference>
<dbReference type="RefSeq" id="WP_012212005.1">
    <property type="nucleotide sequence ID" value="NC_010080.1"/>
</dbReference>
<dbReference type="SMR" id="A8YVR3"/>
<dbReference type="KEGG" id="lhe:lhv_1348"/>
<dbReference type="eggNOG" id="COG0442">
    <property type="taxonomic scope" value="Bacteria"/>
</dbReference>
<dbReference type="HOGENOM" id="CLU_016739_0_0_9"/>
<dbReference type="Proteomes" id="UP000000790">
    <property type="component" value="Chromosome"/>
</dbReference>
<dbReference type="GO" id="GO:0005829">
    <property type="term" value="C:cytosol"/>
    <property type="evidence" value="ECO:0007669"/>
    <property type="project" value="TreeGrafter"/>
</dbReference>
<dbReference type="GO" id="GO:0002161">
    <property type="term" value="F:aminoacyl-tRNA deacylase activity"/>
    <property type="evidence" value="ECO:0007669"/>
    <property type="project" value="InterPro"/>
</dbReference>
<dbReference type="GO" id="GO:0005524">
    <property type="term" value="F:ATP binding"/>
    <property type="evidence" value="ECO:0007669"/>
    <property type="project" value="UniProtKB-UniRule"/>
</dbReference>
<dbReference type="GO" id="GO:0140096">
    <property type="term" value="F:catalytic activity, acting on a protein"/>
    <property type="evidence" value="ECO:0007669"/>
    <property type="project" value="UniProtKB-ARBA"/>
</dbReference>
<dbReference type="GO" id="GO:0004827">
    <property type="term" value="F:proline-tRNA ligase activity"/>
    <property type="evidence" value="ECO:0007669"/>
    <property type="project" value="UniProtKB-UniRule"/>
</dbReference>
<dbReference type="GO" id="GO:0016740">
    <property type="term" value="F:transferase activity"/>
    <property type="evidence" value="ECO:0007669"/>
    <property type="project" value="UniProtKB-ARBA"/>
</dbReference>
<dbReference type="GO" id="GO:0006433">
    <property type="term" value="P:prolyl-tRNA aminoacylation"/>
    <property type="evidence" value="ECO:0007669"/>
    <property type="project" value="UniProtKB-UniRule"/>
</dbReference>
<dbReference type="CDD" id="cd04334">
    <property type="entry name" value="ProRS-INS"/>
    <property type="match status" value="1"/>
</dbReference>
<dbReference type="CDD" id="cd00861">
    <property type="entry name" value="ProRS_anticodon_short"/>
    <property type="match status" value="1"/>
</dbReference>
<dbReference type="CDD" id="cd00779">
    <property type="entry name" value="ProRS_core_prok"/>
    <property type="match status" value="1"/>
</dbReference>
<dbReference type="FunFam" id="3.40.50.800:FF:000011">
    <property type="entry name" value="Proline--tRNA ligase"/>
    <property type="match status" value="1"/>
</dbReference>
<dbReference type="Gene3D" id="3.40.50.800">
    <property type="entry name" value="Anticodon-binding domain"/>
    <property type="match status" value="1"/>
</dbReference>
<dbReference type="Gene3D" id="3.30.930.10">
    <property type="entry name" value="Bira Bifunctional Protein, Domain 2"/>
    <property type="match status" value="2"/>
</dbReference>
<dbReference type="Gene3D" id="3.90.960.10">
    <property type="entry name" value="YbaK/aminoacyl-tRNA synthetase-associated domain"/>
    <property type="match status" value="1"/>
</dbReference>
<dbReference type="HAMAP" id="MF_01569">
    <property type="entry name" value="Pro_tRNA_synth_type1"/>
    <property type="match status" value="1"/>
</dbReference>
<dbReference type="InterPro" id="IPR002314">
    <property type="entry name" value="aa-tRNA-synt_IIb"/>
</dbReference>
<dbReference type="InterPro" id="IPR006195">
    <property type="entry name" value="aa-tRNA-synth_II"/>
</dbReference>
<dbReference type="InterPro" id="IPR045864">
    <property type="entry name" value="aa-tRNA-synth_II/BPL/LPL"/>
</dbReference>
<dbReference type="InterPro" id="IPR004154">
    <property type="entry name" value="Anticodon-bd"/>
</dbReference>
<dbReference type="InterPro" id="IPR036621">
    <property type="entry name" value="Anticodon-bd_dom_sf"/>
</dbReference>
<dbReference type="InterPro" id="IPR002316">
    <property type="entry name" value="Pro-tRNA-ligase_IIa"/>
</dbReference>
<dbReference type="InterPro" id="IPR004500">
    <property type="entry name" value="Pro-tRNA-synth_IIa_bac-type"/>
</dbReference>
<dbReference type="InterPro" id="IPR023717">
    <property type="entry name" value="Pro-tRNA-Synthase_IIa_type1"/>
</dbReference>
<dbReference type="InterPro" id="IPR050062">
    <property type="entry name" value="Pro-tRNA_synthetase"/>
</dbReference>
<dbReference type="InterPro" id="IPR044140">
    <property type="entry name" value="ProRS_anticodon_short"/>
</dbReference>
<dbReference type="InterPro" id="IPR033730">
    <property type="entry name" value="ProRS_core_prok"/>
</dbReference>
<dbReference type="InterPro" id="IPR036754">
    <property type="entry name" value="YbaK/aa-tRNA-synt-asso_dom_sf"/>
</dbReference>
<dbReference type="InterPro" id="IPR007214">
    <property type="entry name" value="YbaK/aa-tRNA-synth-assoc-dom"/>
</dbReference>
<dbReference type="NCBIfam" id="NF006625">
    <property type="entry name" value="PRK09194.1"/>
    <property type="match status" value="1"/>
</dbReference>
<dbReference type="NCBIfam" id="TIGR00409">
    <property type="entry name" value="proS_fam_II"/>
    <property type="match status" value="1"/>
</dbReference>
<dbReference type="PANTHER" id="PTHR42753">
    <property type="entry name" value="MITOCHONDRIAL RIBOSOME PROTEIN L39/PROLYL-TRNA LIGASE FAMILY MEMBER"/>
    <property type="match status" value="1"/>
</dbReference>
<dbReference type="PANTHER" id="PTHR42753:SF2">
    <property type="entry name" value="PROLINE--TRNA LIGASE"/>
    <property type="match status" value="1"/>
</dbReference>
<dbReference type="Pfam" id="PF03129">
    <property type="entry name" value="HGTP_anticodon"/>
    <property type="match status" value="1"/>
</dbReference>
<dbReference type="Pfam" id="PF00587">
    <property type="entry name" value="tRNA-synt_2b"/>
    <property type="match status" value="1"/>
</dbReference>
<dbReference type="Pfam" id="PF04073">
    <property type="entry name" value="tRNA_edit"/>
    <property type="match status" value="1"/>
</dbReference>
<dbReference type="PRINTS" id="PR01046">
    <property type="entry name" value="TRNASYNTHPRO"/>
</dbReference>
<dbReference type="SUPFAM" id="SSF52954">
    <property type="entry name" value="Class II aaRS ABD-related"/>
    <property type="match status" value="1"/>
</dbReference>
<dbReference type="SUPFAM" id="SSF55681">
    <property type="entry name" value="Class II aaRS and biotin synthetases"/>
    <property type="match status" value="1"/>
</dbReference>
<dbReference type="SUPFAM" id="SSF55826">
    <property type="entry name" value="YbaK/ProRS associated domain"/>
    <property type="match status" value="1"/>
</dbReference>
<dbReference type="PROSITE" id="PS50862">
    <property type="entry name" value="AA_TRNA_LIGASE_II"/>
    <property type="match status" value="1"/>
</dbReference>
<protein>
    <recommendedName>
        <fullName evidence="1">Proline--tRNA ligase</fullName>
        <ecNumber evidence="1">6.1.1.15</ecNumber>
    </recommendedName>
    <alternativeName>
        <fullName evidence="1">Prolyl-tRNA synthetase</fullName>
        <shortName evidence="1">ProRS</shortName>
    </alternativeName>
</protein>
<evidence type="ECO:0000255" key="1">
    <source>
        <dbReference type="HAMAP-Rule" id="MF_01569"/>
    </source>
</evidence>
<name>SYP_LACH4</name>
<sequence>MRQSKFFMPTLKEAPSDAVAESHKLMIRGGYIRQVTAGVYAYLPLGYRVLRKAEGIIEDEMEKINVPEMIMPHLLPATLWQESGRYKKYGAEMFKLKDRHGRESLLGPTHEETFTEIIAKNLKSYKQMPLALYQIQTKFRDENRPRFGLLRGREFVMLDGYSFAATRDQLDEQFDDQKSAYKRIFKRAGVTVHPVIADSGTMGGKNSTEFQAPAAIGEDTIATNEKGTYAANLEMAKSIDTFKQEPEDAKELTKVATPGCDTIEKLAKFLNVPATRIVKSILYIADDQKVLVLIRGDKQINEVKLGHVLDADEVHEADSADLKEITGSEKGGVGPVDADWADKIIADETVKDLYNVVVGAGETDYQFENANLDRDFKVDEFVDIRTANEGEPDPVDHLPLKFTTSIEVGHIFKLGTYYTKTMGADFLDQNGKAKPVIMGSYGIGVTRMLSAAVEQHLTEHGVAWPKEIAPFAIHIVQMKMNKEDQTELAEKLEKKFSEKYDVLYDDRKERAGVKFADADLVGAPIRITVGKKAADGIVEVKRPTDDKATEISIDELDKFVNQELG</sequence>
<gene>
    <name evidence="1" type="primary">proS</name>
    <name type="ordered locus">lhv_1348</name>
</gene>